<name>EIF3F_YARLI</name>
<organism>
    <name type="scientific">Yarrowia lipolytica (strain CLIB 122 / E 150)</name>
    <name type="common">Yeast</name>
    <name type="synonym">Candida lipolytica</name>
    <dbReference type="NCBI Taxonomy" id="284591"/>
    <lineage>
        <taxon>Eukaryota</taxon>
        <taxon>Fungi</taxon>
        <taxon>Dikarya</taxon>
        <taxon>Ascomycota</taxon>
        <taxon>Saccharomycotina</taxon>
        <taxon>Dipodascomycetes</taxon>
        <taxon>Dipodascales</taxon>
        <taxon>Dipodascales incertae sedis</taxon>
        <taxon>Yarrowia</taxon>
    </lineage>
</organism>
<comment type="function">
    <text evidence="1">Component of the eukaryotic translation initiation factor 3 (eIF-3) complex, which is involved in protein synthesis of a specialized repertoire of mRNAs and, together with other initiation factors, stimulates binding of mRNA and methionyl-tRNAi to the 40S ribosome. The eIF-3 complex specifically targets and initiates translation of a subset of mRNAs involved in cell proliferation.</text>
</comment>
<comment type="subunit">
    <text evidence="1">Component of the eukaryotic translation initiation factor 3 (eIF-3) complex.</text>
</comment>
<comment type="subcellular location">
    <subcellularLocation>
        <location evidence="1">Cytoplasm</location>
    </subcellularLocation>
</comment>
<comment type="similarity">
    <text evidence="1">Belongs to the eIF-3 subunit F family.</text>
</comment>
<dbReference type="EMBL" id="CR382131">
    <property type="protein sequence ID" value="CAG80042.1"/>
    <property type="molecule type" value="Genomic_DNA"/>
</dbReference>
<dbReference type="RefSeq" id="XP_504441.1">
    <property type="nucleotide sequence ID" value="XM_504441.1"/>
</dbReference>
<dbReference type="SMR" id="Q6C4H1"/>
<dbReference type="STRING" id="284591.Q6C4H1"/>
<dbReference type="EnsemblFungi" id="CAG80042">
    <property type="protein sequence ID" value="CAG80042"/>
    <property type="gene ID" value="YALI0_E26851g"/>
</dbReference>
<dbReference type="KEGG" id="yli:2912764"/>
<dbReference type="VEuPathDB" id="FungiDB:YALI0_E26851g"/>
<dbReference type="HOGENOM" id="CLU_027018_0_0_1"/>
<dbReference type="InParanoid" id="Q6C4H1"/>
<dbReference type="OMA" id="EYFVHFH"/>
<dbReference type="OrthoDB" id="122397at4891"/>
<dbReference type="Proteomes" id="UP000001300">
    <property type="component" value="Chromosome E"/>
</dbReference>
<dbReference type="GO" id="GO:0016282">
    <property type="term" value="C:eukaryotic 43S preinitiation complex"/>
    <property type="evidence" value="ECO:0007669"/>
    <property type="project" value="UniProtKB-UniRule"/>
</dbReference>
<dbReference type="GO" id="GO:0033290">
    <property type="term" value="C:eukaryotic 48S preinitiation complex"/>
    <property type="evidence" value="ECO:0007669"/>
    <property type="project" value="UniProtKB-UniRule"/>
</dbReference>
<dbReference type="GO" id="GO:0071541">
    <property type="term" value="C:eukaryotic translation initiation factor 3 complex, eIF3m"/>
    <property type="evidence" value="ECO:0000318"/>
    <property type="project" value="GO_Central"/>
</dbReference>
<dbReference type="GO" id="GO:0008237">
    <property type="term" value="F:metallopeptidase activity"/>
    <property type="evidence" value="ECO:0007669"/>
    <property type="project" value="InterPro"/>
</dbReference>
<dbReference type="GO" id="GO:0003743">
    <property type="term" value="F:translation initiation factor activity"/>
    <property type="evidence" value="ECO:0007669"/>
    <property type="project" value="UniProtKB-UniRule"/>
</dbReference>
<dbReference type="GO" id="GO:0031369">
    <property type="term" value="F:translation initiation factor binding"/>
    <property type="evidence" value="ECO:0000318"/>
    <property type="project" value="GO_Central"/>
</dbReference>
<dbReference type="GO" id="GO:0001732">
    <property type="term" value="P:formation of cytoplasmic translation initiation complex"/>
    <property type="evidence" value="ECO:0007669"/>
    <property type="project" value="UniProtKB-UniRule"/>
</dbReference>
<dbReference type="GO" id="GO:0006413">
    <property type="term" value="P:translational initiation"/>
    <property type="evidence" value="ECO:0000318"/>
    <property type="project" value="GO_Central"/>
</dbReference>
<dbReference type="CDD" id="cd08064">
    <property type="entry name" value="MPN_eIF3f"/>
    <property type="match status" value="1"/>
</dbReference>
<dbReference type="Gene3D" id="3.40.140.10">
    <property type="entry name" value="Cytidine Deaminase, domain 2"/>
    <property type="match status" value="1"/>
</dbReference>
<dbReference type="HAMAP" id="MF_03005">
    <property type="entry name" value="eIF3f"/>
    <property type="match status" value="1"/>
</dbReference>
<dbReference type="InterPro" id="IPR027531">
    <property type="entry name" value="eIF3f"/>
</dbReference>
<dbReference type="InterPro" id="IPR024969">
    <property type="entry name" value="EIF3F/CSN6-like_C"/>
</dbReference>
<dbReference type="InterPro" id="IPR000555">
    <property type="entry name" value="JAMM/MPN+_dom"/>
</dbReference>
<dbReference type="InterPro" id="IPR037518">
    <property type="entry name" value="MPN"/>
</dbReference>
<dbReference type="PANTHER" id="PTHR10540:SF6">
    <property type="entry name" value="EUKARYOTIC TRANSLATION INITIATION FACTOR 3 SUBUNIT F"/>
    <property type="match status" value="1"/>
</dbReference>
<dbReference type="PANTHER" id="PTHR10540">
    <property type="entry name" value="EUKARYOTIC TRANSLATION INITIATION FACTOR 3 SUBUNIT F-RELATED"/>
    <property type="match status" value="1"/>
</dbReference>
<dbReference type="Pfam" id="PF01398">
    <property type="entry name" value="JAB"/>
    <property type="match status" value="1"/>
</dbReference>
<dbReference type="Pfam" id="PF13012">
    <property type="entry name" value="MitMem_reg"/>
    <property type="match status" value="1"/>
</dbReference>
<dbReference type="SMART" id="SM00232">
    <property type="entry name" value="JAB_MPN"/>
    <property type="match status" value="1"/>
</dbReference>
<dbReference type="PROSITE" id="PS50249">
    <property type="entry name" value="MPN"/>
    <property type="match status" value="1"/>
</dbReference>
<keyword id="KW-0963">Cytoplasm</keyword>
<keyword id="KW-0396">Initiation factor</keyword>
<keyword id="KW-0648">Protein biosynthesis</keyword>
<keyword id="KW-1185">Reference proteome</keyword>
<protein>
    <recommendedName>
        <fullName evidence="1">Eukaryotic translation initiation factor 3 subunit F</fullName>
        <shortName evidence="1">eIF3f</shortName>
    </recommendedName>
</protein>
<feature type="chain" id="PRO_0000364336" description="Eukaryotic translation initiation factor 3 subunit F">
    <location>
        <begin position="1"/>
        <end position="294"/>
    </location>
</feature>
<feature type="domain" description="MPN" evidence="2">
    <location>
        <begin position="20"/>
        <end position="163"/>
    </location>
</feature>
<evidence type="ECO:0000255" key="1">
    <source>
        <dbReference type="HAMAP-Rule" id="MF_03005"/>
    </source>
</evidence>
<evidence type="ECO:0000255" key="2">
    <source>
        <dbReference type="PROSITE-ProRule" id="PRU01182"/>
    </source>
</evidence>
<accession>Q6C4H1</accession>
<sequence length="294" mass="32102">MSETLQISRVAGTNGAPTHVTVTAQALFQILDHALRREEEQSKVIGTLVGIRSEDGSEVEVRNAYAVPHSESEQEMTIDLEYNPTMLALHRKAFPKEVIVGWYATSSELNTFSGLIHDYYTQLDGTPAIHLTVEAANLADTLLPRTYVASAVGIDPSKNSGNCVFVPISNEVKFNDSADRAALEAISSARESPERSINLTSDLANLENSLTQVLDMLERVQTYVARVISGEESSEKAQQVGKQLLSTLTLTPSLDAQNLEALFNSHLQDVLMVVYLANTVKTQLQLSAKLTTLV</sequence>
<gene>
    <name type="ordered locus">YALI0E26851g</name>
</gene>
<reference key="1">
    <citation type="journal article" date="2004" name="Nature">
        <title>Genome evolution in yeasts.</title>
        <authorList>
            <person name="Dujon B."/>
            <person name="Sherman D."/>
            <person name="Fischer G."/>
            <person name="Durrens P."/>
            <person name="Casaregola S."/>
            <person name="Lafontaine I."/>
            <person name="de Montigny J."/>
            <person name="Marck C."/>
            <person name="Neuveglise C."/>
            <person name="Talla E."/>
            <person name="Goffard N."/>
            <person name="Frangeul L."/>
            <person name="Aigle M."/>
            <person name="Anthouard V."/>
            <person name="Babour A."/>
            <person name="Barbe V."/>
            <person name="Barnay S."/>
            <person name="Blanchin S."/>
            <person name="Beckerich J.-M."/>
            <person name="Beyne E."/>
            <person name="Bleykasten C."/>
            <person name="Boisrame A."/>
            <person name="Boyer J."/>
            <person name="Cattolico L."/>
            <person name="Confanioleri F."/>
            <person name="de Daruvar A."/>
            <person name="Despons L."/>
            <person name="Fabre E."/>
            <person name="Fairhead C."/>
            <person name="Ferry-Dumazet H."/>
            <person name="Groppi A."/>
            <person name="Hantraye F."/>
            <person name="Hennequin C."/>
            <person name="Jauniaux N."/>
            <person name="Joyet P."/>
            <person name="Kachouri R."/>
            <person name="Kerrest A."/>
            <person name="Koszul R."/>
            <person name="Lemaire M."/>
            <person name="Lesur I."/>
            <person name="Ma L."/>
            <person name="Muller H."/>
            <person name="Nicaud J.-M."/>
            <person name="Nikolski M."/>
            <person name="Oztas S."/>
            <person name="Ozier-Kalogeropoulos O."/>
            <person name="Pellenz S."/>
            <person name="Potier S."/>
            <person name="Richard G.-F."/>
            <person name="Straub M.-L."/>
            <person name="Suleau A."/>
            <person name="Swennen D."/>
            <person name="Tekaia F."/>
            <person name="Wesolowski-Louvel M."/>
            <person name="Westhof E."/>
            <person name="Wirth B."/>
            <person name="Zeniou-Meyer M."/>
            <person name="Zivanovic Y."/>
            <person name="Bolotin-Fukuhara M."/>
            <person name="Thierry A."/>
            <person name="Bouchier C."/>
            <person name="Caudron B."/>
            <person name="Scarpelli C."/>
            <person name="Gaillardin C."/>
            <person name="Weissenbach J."/>
            <person name="Wincker P."/>
            <person name="Souciet J.-L."/>
        </authorList>
    </citation>
    <scope>NUCLEOTIDE SEQUENCE [LARGE SCALE GENOMIC DNA]</scope>
    <source>
        <strain>CLIB 122 / E 150</strain>
    </source>
</reference>
<proteinExistence type="inferred from homology"/>